<feature type="chain" id="PRO_0000063937" description="Aquaporin-2">
    <location>
        <begin position="1" status="less than"/>
        <end position="109" status="greater than"/>
    </location>
</feature>
<feature type="topological domain" description="Cytoplasmic" evidence="4">
    <location>
        <begin position="1" status="less than"/>
        <end position="6"/>
    </location>
</feature>
<feature type="transmembrane region" description="Helical" evidence="2">
    <location>
        <begin position="7"/>
        <end position="27"/>
    </location>
</feature>
<feature type="topological domain" description="Extracellular" evidence="4">
    <location>
        <begin position="28"/>
        <end position="35"/>
    </location>
</feature>
<feature type="transmembrane region" description="Helical" evidence="2">
    <location>
        <begin position="36"/>
        <end position="54"/>
    </location>
</feature>
<feature type="topological domain" description="Cytoplasmic" evidence="4">
    <location>
        <begin position="55"/>
        <end position="59"/>
    </location>
</feature>
<feature type="intramembrane region" description="Discontinuously helical" evidence="2">
    <location>
        <begin position="60"/>
        <end position="69"/>
    </location>
</feature>
<feature type="topological domain" description="Cytoplasmic" evidence="4">
    <location>
        <begin position="70"/>
        <end position="80"/>
    </location>
</feature>
<feature type="transmembrane region" description="Helical" evidence="2">
    <location>
        <begin position="81"/>
        <end position="102"/>
    </location>
</feature>
<feature type="topological domain" description="Extracellular" evidence="4">
    <location>
        <begin position="103"/>
        <end position="109" status="greater than"/>
    </location>
</feature>
<feature type="short sequence motif" description="NPA 1" evidence="2">
    <location>
        <begin position="63"/>
        <end position="65"/>
    </location>
</feature>
<feature type="non-terminal residue">
    <location>
        <position position="1"/>
    </location>
</feature>
<feature type="non-terminal residue">
    <location>
        <position position="109"/>
    </location>
</feature>
<reference key="1">
    <citation type="journal article" date="1997" name="Mol. Biol. Evol.">
        <title>Molecular evolution of mammalian aquaporin-2: further evidence that elephant shrew and aardvark join the paenungulate clade.</title>
        <authorList>
            <person name="Madsen O.J."/>
            <person name="Deen P.M.T."/>
            <person name="Pesole G."/>
            <person name="Saccone C."/>
            <person name="de Jong W.W."/>
        </authorList>
    </citation>
    <scope>NUCLEOTIDE SEQUENCE [GENOMIC DNA]</scope>
</reference>
<sequence length="109" mass="11248">SIAFSKAVFSEFLATLLFVFFGLGSALNWPQALPSGLQIAMAFGLAIGTLVQTLGHISGAHINPAVTVACLVGCHVSFLRAIFYVAAQLLGAVAGAALLHELTPPDIRG</sequence>
<keyword id="KW-1003">Cell membrane</keyword>
<keyword id="KW-0968">Cytoplasmic vesicle</keyword>
<keyword id="KW-0325">Glycoprotein</keyword>
<keyword id="KW-0333">Golgi apparatus</keyword>
<keyword id="KW-0472">Membrane</keyword>
<keyword id="KW-0597">Phosphoprotein</keyword>
<keyword id="KW-0812">Transmembrane</keyword>
<keyword id="KW-1133">Transmembrane helix</keyword>
<keyword id="KW-0813">Transport</keyword>
<accession>P79200</accession>
<gene>
    <name evidence="2" type="primary">AQP2</name>
</gene>
<evidence type="ECO:0000250" key="1">
    <source>
        <dbReference type="UniProtKB" id="P34080"/>
    </source>
</evidence>
<evidence type="ECO:0000250" key="2">
    <source>
        <dbReference type="UniProtKB" id="P41181"/>
    </source>
</evidence>
<evidence type="ECO:0000303" key="3">
    <source>
    </source>
</evidence>
<evidence type="ECO:0000305" key="4"/>
<organism>
    <name type="scientific">Orycteropus afer</name>
    <name type="common">Aardvark</name>
    <dbReference type="NCBI Taxonomy" id="9818"/>
    <lineage>
        <taxon>Eukaryota</taxon>
        <taxon>Metazoa</taxon>
        <taxon>Chordata</taxon>
        <taxon>Craniata</taxon>
        <taxon>Vertebrata</taxon>
        <taxon>Euteleostomi</taxon>
        <taxon>Mammalia</taxon>
        <taxon>Eutheria</taxon>
        <taxon>Afrotheria</taxon>
        <taxon>Tubulidentata</taxon>
        <taxon>Orycteropodidae</taxon>
        <taxon>Orycteropus</taxon>
    </lineage>
</organism>
<dbReference type="EMBL" id="Y10632">
    <property type="protein sequence ID" value="CAA71657.1"/>
    <property type="molecule type" value="Genomic_DNA"/>
</dbReference>
<dbReference type="SMR" id="P79200"/>
<dbReference type="GO" id="GO:0016324">
    <property type="term" value="C:apical plasma membrane"/>
    <property type="evidence" value="ECO:0000250"/>
    <property type="project" value="UniProtKB"/>
</dbReference>
<dbReference type="GO" id="GO:0016323">
    <property type="term" value="C:basolateral plasma membrane"/>
    <property type="evidence" value="ECO:0007669"/>
    <property type="project" value="UniProtKB-SubCell"/>
</dbReference>
<dbReference type="GO" id="GO:0030659">
    <property type="term" value="C:cytoplasmic vesicle membrane"/>
    <property type="evidence" value="ECO:0007669"/>
    <property type="project" value="UniProtKB-SubCell"/>
</dbReference>
<dbReference type="GO" id="GO:0005794">
    <property type="term" value="C:Golgi apparatus"/>
    <property type="evidence" value="ECO:0007669"/>
    <property type="project" value="UniProtKB-SubCell"/>
</dbReference>
<dbReference type="GO" id="GO:0005886">
    <property type="term" value="C:plasma membrane"/>
    <property type="evidence" value="ECO:0000250"/>
    <property type="project" value="UniProtKB"/>
</dbReference>
<dbReference type="GO" id="GO:0015250">
    <property type="term" value="F:water channel activity"/>
    <property type="evidence" value="ECO:0000250"/>
    <property type="project" value="UniProtKB"/>
</dbReference>
<dbReference type="GO" id="GO:0051289">
    <property type="term" value="P:protein homotetramerization"/>
    <property type="evidence" value="ECO:0000250"/>
    <property type="project" value="UniProtKB"/>
</dbReference>
<dbReference type="GO" id="GO:0006833">
    <property type="term" value="P:water transport"/>
    <property type="evidence" value="ECO:0000250"/>
    <property type="project" value="UniProtKB"/>
</dbReference>
<dbReference type="FunFam" id="1.20.1080.10:FF:000032">
    <property type="entry name" value="Aquaporin-2"/>
    <property type="match status" value="1"/>
</dbReference>
<dbReference type="Gene3D" id="1.20.1080.10">
    <property type="entry name" value="Glycerol uptake facilitator protein"/>
    <property type="match status" value="1"/>
</dbReference>
<dbReference type="InterPro" id="IPR023271">
    <property type="entry name" value="Aquaporin-like"/>
</dbReference>
<dbReference type="InterPro" id="IPR034294">
    <property type="entry name" value="Aquaporin_transptr"/>
</dbReference>
<dbReference type="InterPro" id="IPR000425">
    <property type="entry name" value="MIP"/>
</dbReference>
<dbReference type="InterPro" id="IPR022357">
    <property type="entry name" value="MIP_CS"/>
</dbReference>
<dbReference type="PANTHER" id="PTHR19139">
    <property type="entry name" value="AQUAPORIN TRANSPORTER"/>
    <property type="match status" value="1"/>
</dbReference>
<dbReference type="PANTHER" id="PTHR19139:SF45">
    <property type="entry name" value="AQUAPORIN-2"/>
    <property type="match status" value="1"/>
</dbReference>
<dbReference type="Pfam" id="PF00230">
    <property type="entry name" value="MIP"/>
    <property type="match status" value="1"/>
</dbReference>
<dbReference type="PRINTS" id="PR00783">
    <property type="entry name" value="MINTRINSICP"/>
</dbReference>
<dbReference type="SUPFAM" id="SSF81338">
    <property type="entry name" value="Aquaporin-like"/>
    <property type="match status" value="1"/>
</dbReference>
<dbReference type="PROSITE" id="PS00221">
    <property type="entry name" value="MIP"/>
    <property type="match status" value="1"/>
</dbReference>
<comment type="function">
    <text evidence="2">Forms a water-specific channel that provides the plasma membranes of renal collecting duct with high permeability to water, thereby permitting water to move in the direction of an osmotic gradient. Plays an essential role in renal water homeostasis. Could also be permeable to glycerol.</text>
</comment>
<comment type="catalytic activity">
    <reaction evidence="2">
        <text>H2O(in) = H2O(out)</text>
        <dbReference type="Rhea" id="RHEA:29667"/>
        <dbReference type="ChEBI" id="CHEBI:15377"/>
    </reaction>
</comment>
<comment type="catalytic activity">
    <reaction evidence="2">
        <text>glycerol(in) = glycerol(out)</text>
        <dbReference type="Rhea" id="RHEA:29675"/>
        <dbReference type="ChEBI" id="CHEBI:17754"/>
    </reaction>
</comment>
<comment type="subunit">
    <text evidence="2">Homotetramer.</text>
</comment>
<comment type="subcellular location">
    <subcellularLocation>
        <location evidence="2">Apical cell membrane</location>
        <topology evidence="2">Multi-pass membrane protein</topology>
    </subcellularLocation>
    <subcellularLocation>
        <location evidence="1">Basolateral cell membrane</location>
        <topology evidence="2">Multi-pass membrane protein</topology>
    </subcellularLocation>
    <subcellularLocation>
        <location evidence="2">Cell membrane</location>
        <topology evidence="2">Multi-pass membrane protein</topology>
    </subcellularLocation>
    <subcellularLocation>
        <location evidence="2">Cytoplasmic vesicle membrane</location>
        <topology evidence="2">Multi-pass membrane protein</topology>
    </subcellularLocation>
    <subcellularLocation>
        <location evidence="2">Golgi apparatus</location>
        <location evidence="2">trans-Golgi network membrane</location>
        <topology evidence="2">Multi-pass membrane protein</topology>
    </subcellularLocation>
    <text evidence="2">Shuttles from vesicles to the apical membrane. Vasopressin-regulated phosphorylation is required for translocation to the apical cell membrane. PLEKHA8/FAPP2 is required to transport AQP2 from the TGN to sites where AQP2 is phosphorylated.</text>
</comment>
<comment type="domain">
    <text evidence="2">Aquaporins contain two tandem repeats each containing three membrane-spanning domains and a pore-forming loop with the signature motif Asn-Pro-Ala (NPA).</text>
</comment>
<comment type="PTM">
    <text evidence="2">Serine phosphorylation is necessary and sufficient for expression at the apical membrane. Endocytosis is not phosphorylation-dependent.</text>
</comment>
<comment type="PTM">
    <text evidence="2">N-glycosylated.</text>
</comment>
<comment type="similarity">
    <text evidence="4">Belongs to the MIP/aquaporin (TC 1.A.8) family.</text>
</comment>
<protein>
    <recommendedName>
        <fullName evidence="3">Aquaporin-2</fullName>
        <shortName>AQP-2</shortName>
    </recommendedName>
    <alternativeName>
        <fullName>ADH water channel</fullName>
    </alternativeName>
    <alternativeName>
        <fullName>Aquaporin-CD</fullName>
        <shortName>AQP-CD</shortName>
    </alternativeName>
    <alternativeName>
        <fullName>Collecting duct water channel protein</fullName>
    </alternativeName>
    <alternativeName>
        <fullName>WCH-CD</fullName>
    </alternativeName>
    <alternativeName>
        <fullName>Water channel protein for renal collecting duct</fullName>
    </alternativeName>
</protein>
<name>AQP2_ORYAF</name>
<proteinExistence type="inferred from homology"/>